<sequence length="272" mass="29552">MTDMYSLFVAFVLGVVEGLTEFLPVSSTGHMIIVGELLGFTGDKAKTFEVIIQLGSILAVVVVFWRRLFGLIGIHFGKVPHEGKTNGHLTLGHILLAMIPAVGLGLAFHDVIKSLFNPQSVMYALVAGGLLLLAAEWFKPKNPKATGLDDITYRQAFAIGCFQCLALWPGFSRSGATISGGMLVGVNRYAASEFSFILAVPMMLGASGLDLYKSLHFLSWGDLPMFAVGFITAFVVALIAIKTFLSLIKRISFVPFAIYRFIVAAAVYWVFM</sequence>
<name>UPPP_YERE8</name>
<feature type="chain" id="PRO_0000290780" description="Undecaprenyl-diphosphatase">
    <location>
        <begin position="1"/>
        <end position="272"/>
    </location>
</feature>
<feature type="transmembrane region" description="Helical" evidence="1">
    <location>
        <begin position="5"/>
        <end position="25"/>
    </location>
</feature>
<feature type="transmembrane region" description="Helical" evidence="1">
    <location>
        <begin position="45"/>
        <end position="65"/>
    </location>
</feature>
<feature type="transmembrane region" description="Helical" evidence="1">
    <location>
        <begin position="88"/>
        <end position="108"/>
    </location>
</feature>
<feature type="transmembrane region" description="Helical" evidence="1">
    <location>
        <begin position="115"/>
        <end position="135"/>
    </location>
</feature>
<feature type="transmembrane region" description="Helical" evidence="1">
    <location>
        <begin position="152"/>
        <end position="171"/>
    </location>
</feature>
<feature type="transmembrane region" description="Helical" evidence="1">
    <location>
        <begin position="189"/>
        <end position="209"/>
    </location>
</feature>
<feature type="transmembrane region" description="Helical" evidence="1">
    <location>
        <begin position="221"/>
        <end position="241"/>
    </location>
</feature>
<feature type="transmembrane region" description="Helical" evidence="1">
    <location>
        <begin position="251"/>
        <end position="271"/>
    </location>
</feature>
<accession>A1JQW4</accession>
<comment type="function">
    <text evidence="1">Catalyzes the dephosphorylation of undecaprenyl diphosphate (UPP). Confers resistance to bacitracin.</text>
</comment>
<comment type="catalytic activity">
    <reaction evidence="1">
        <text>di-trans,octa-cis-undecaprenyl diphosphate + H2O = di-trans,octa-cis-undecaprenyl phosphate + phosphate + H(+)</text>
        <dbReference type="Rhea" id="RHEA:28094"/>
        <dbReference type="ChEBI" id="CHEBI:15377"/>
        <dbReference type="ChEBI" id="CHEBI:15378"/>
        <dbReference type="ChEBI" id="CHEBI:43474"/>
        <dbReference type="ChEBI" id="CHEBI:58405"/>
        <dbReference type="ChEBI" id="CHEBI:60392"/>
        <dbReference type="EC" id="3.6.1.27"/>
    </reaction>
</comment>
<comment type="subcellular location">
    <subcellularLocation>
        <location evidence="1">Cell inner membrane</location>
        <topology evidence="1">Multi-pass membrane protein</topology>
    </subcellularLocation>
</comment>
<comment type="miscellaneous">
    <text>Bacitracin is thought to be involved in the inhibition of peptidoglycan synthesis by sequestering undecaprenyl diphosphate, thereby reducing the pool of lipid carrier available.</text>
</comment>
<comment type="similarity">
    <text evidence="1">Belongs to the UppP family.</text>
</comment>
<dbReference type="EC" id="3.6.1.27" evidence="1"/>
<dbReference type="EMBL" id="AM286415">
    <property type="protein sequence ID" value="CAL13705.1"/>
    <property type="molecule type" value="Genomic_DNA"/>
</dbReference>
<dbReference type="RefSeq" id="WP_005174137.1">
    <property type="nucleotide sequence ID" value="NC_008800.1"/>
</dbReference>
<dbReference type="RefSeq" id="YP_001007833.1">
    <property type="nucleotide sequence ID" value="NC_008800.1"/>
</dbReference>
<dbReference type="SMR" id="A1JQW4"/>
<dbReference type="KEGG" id="yen:YE3678"/>
<dbReference type="PATRIC" id="fig|393305.7.peg.3916"/>
<dbReference type="eggNOG" id="COG1968">
    <property type="taxonomic scope" value="Bacteria"/>
</dbReference>
<dbReference type="HOGENOM" id="CLU_060296_2_0_6"/>
<dbReference type="OrthoDB" id="9808289at2"/>
<dbReference type="Proteomes" id="UP000000642">
    <property type="component" value="Chromosome"/>
</dbReference>
<dbReference type="GO" id="GO:0005886">
    <property type="term" value="C:plasma membrane"/>
    <property type="evidence" value="ECO:0007669"/>
    <property type="project" value="UniProtKB-SubCell"/>
</dbReference>
<dbReference type="GO" id="GO:0050380">
    <property type="term" value="F:undecaprenyl-diphosphatase activity"/>
    <property type="evidence" value="ECO:0007669"/>
    <property type="project" value="UniProtKB-UniRule"/>
</dbReference>
<dbReference type="GO" id="GO:0071555">
    <property type="term" value="P:cell wall organization"/>
    <property type="evidence" value="ECO:0007669"/>
    <property type="project" value="UniProtKB-KW"/>
</dbReference>
<dbReference type="GO" id="GO:0009252">
    <property type="term" value="P:peptidoglycan biosynthetic process"/>
    <property type="evidence" value="ECO:0007669"/>
    <property type="project" value="UniProtKB-KW"/>
</dbReference>
<dbReference type="GO" id="GO:0008360">
    <property type="term" value="P:regulation of cell shape"/>
    <property type="evidence" value="ECO:0007669"/>
    <property type="project" value="UniProtKB-KW"/>
</dbReference>
<dbReference type="GO" id="GO:0046677">
    <property type="term" value="P:response to antibiotic"/>
    <property type="evidence" value="ECO:0007669"/>
    <property type="project" value="UniProtKB-UniRule"/>
</dbReference>
<dbReference type="HAMAP" id="MF_01006">
    <property type="entry name" value="Undec_diphosphatase"/>
    <property type="match status" value="1"/>
</dbReference>
<dbReference type="InterPro" id="IPR003824">
    <property type="entry name" value="UppP"/>
</dbReference>
<dbReference type="NCBIfam" id="NF001388">
    <property type="entry name" value="PRK00281.1-1"/>
    <property type="match status" value="1"/>
</dbReference>
<dbReference type="NCBIfam" id="NF001389">
    <property type="entry name" value="PRK00281.1-2"/>
    <property type="match status" value="1"/>
</dbReference>
<dbReference type="NCBIfam" id="NF001390">
    <property type="entry name" value="PRK00281.1-4"/>
    <property type="match status" value="1"/>
</dbReference>
<dbReference type="NCBIfam" id="TIGR00753">
    <property type="entry name" value="undec_PP_bacA"/>
    <property type="match status" value="1"/>
</dbReference>
<dbReference type="PANTHER" id="PTHR30622">
    <property type="entry name" value="UNDECAPRENYL-DIPHOSPHATASE"/>
    <property type="match status" value="1"/>
</dbReference>
<dbReference type="PANTHER" id="PTHR30622:SF3">
    <property type="entry name" value="UNDECAPRENYL-DIPHOSPHATASE"/>
    <property type="match status" value="1"/>
</dbReference>
<dbReference type="Pfam" id="PF02673">
    <property type="entry name" value="BacA"/>
    <property type="match status" value="1"/>
</dbReference>
<protein>
    <recommendedName>
        <fullName evidence="1">Undecaprenyl-diphosphatase</fullName>
        <ecNumber evidence="1">3.6.1.27</ecNumber>
    </recommendedName>
    <alternativeName>
        <fullName evidence="1">Bacitracin resistance protein</fullName>
    </alternativeName>
    <alternativeName>
        <fullName evidence="1">Undecaprenyl pyrophosphate phosphatase</fullName>
    </alternativeName>
</protein>
<reference key="1">
    <citation type="journal article" date="2006" name="PLoS Genet.">
        <title>The complete genome sequence and comparative genome analysis of the high pathogenicity Yersinia enterocolitica strain 8081.</title>
        <authorList>
            <person name="Thomson N.R."/>
            <person name="Howard S."/>
            <person name="Wren B.W."/>
            <person name="Holden M.T.G."/>
            <person name="Crossman L."/>
            <person name="Challis G.L."/>
            <person name="Churcher C."/>
            <person name="Mungall K."/>
            <person name="Brooks K."/>
            <person name="Chillingworth T."/>
            <person name="Feltwell T."/>
            <person name="Abdellah Z."/>
            <person name="Hauser H."/>
            <person name="Jagels K."/>
            <person name="Maddison M."/>
            <person name="Moule S."/>
            <person name="Sanders M."/>
            <person name="Whitehead S."/>
            <person name="Quail M.A."/>
            <person name="Dougan G."/>
            <person name="Parkhill J."/>
            <person name="Prentice M.B."/>
        </authorList>
    </citation>
    <scope>NUCLEOTIDE SEQUENCE [LARGE SCALE GENOMIC DNA]</scope>
    <source>
        <strain>NCTC 13174 / 8081</strain>
    </source>
</reference>
<gene>
    <name evidence="1" type="primary">uppP</name>
    <name type="synonym">bacA</name>
    <name type="ordered locus">YE3678</name>
</gene>
<evidence type="ECO:0000255" key="1">
    <source>
        <dbReference type="HAMAP-Rule" id="MF_01006"/>
    </source>
</evidence>
<keyword id="KW-0046">Antibiotic resistance</keyword>
<keyword id="KW-0997">Cell inner membrane</keyword>
<keyword id="KW-1003">Cell membrane</keyword>
<keyword id="KW-0133">Cell shape</keyword>
<keyword id="KW-0961">Cell wall biogenesis/degradation</keyword>
<keyword id="KW-0378">Hydrolase</keyword>
<keyword id="KW-0472">Membrane</keyword>
<keyword id="KW-0573">Peptidoglycan synthesis</keyword>
<keyword id="KW-0812">Transmembrane</keyword>
<keyword id="KW-1133">Transmembrane helix</keyword>
<organism>
    <name type="scientific">Yersinia enterocolitica serotype O:8 / biotype 1B (strain NCTC 13174 / 8081)</name>
    <dbReference type="NCBI Taxonomy" id="393305"/>
    <lineage>
        <taxon>Bacteria</taxon>
        <taxon>Pseudomonadati</taxon>
        <taxon>Pseudomonadota</taxon>
        <taxon>Gammaproteobacteria</taxon>
        <taxon>Enterobacterales</taxon>
        <taxon>Yersiniaceae</taxon>
        <taxon>Yersinia</taxon>
    </lineage>
</organism>
<proteinExistence type="inferred from homology"/>